<keyword id="KW-0027">Amidation</keyword>
<keyword id="KW-0165">Cleavage on pair of basic residues</keyword>
<keyword id="KW-0527">Neuropeptide</keyword>
<keyword id="KW-1185">Reference proteome</keyword>
<keyword id="KW-0964">Secreted</keyword>
<keyword id="KW-0732">Signal</keyword>
<reference key="1">
    <citation type="journal article" date="1992" name="Proc. Natl. Acad. Sci. U.S.A.">
        <title>Strong evolutionary conservation of neuropeptide Y: sequences of chicken, goldfish, and Torpedo marmorata DNA clones.</title>
        <authorList>
            <person name="Blomqvist A.G."/>
            <person name="Soederberg C."/>
            <person name="Lundell I."/>
            <person name="Milner R.J."/>
            <person name="Larhammar D."/>
        </authorList>
    </citation>
    <scope>NUCLEOTIDE SEQUENCE [MRNA]</scope>
    <source>
        <tissue>Retina</tissue>
    </source>
</reference>
<organism>
    <name type="scientific">Carassius auratus</name>
    <name type="common">Goldfish</name>
    <dbReference type="NCBI Taxonomy" id="7957"/>
    <lineage>
        <taxon>Eukaryota</taxon>
        <taxon>Metazoa</taxon>
        <taxon>Chordata</taxon>
        <taxon>Craniata</taxon>
        <taxon>Vertebrata</taxon>
        <taxon>Euteleostomi</taxon>
        <taxon>Actinopterygii</taxon>
        <taxon>Neopterygii</taxon>
        <taxon>Teleostei</taxon>
        <taxon>Ostariophysi</taxon>
        <taxon>Cypriniformes</taxon>
        <taxon>Cyprinidae</taxon>
        <taxon>Cyprininae</taxon>
        <taxon>Carassius</taxon>
    </lineage>
</organism>
<evidence type="ECO:0000250" key="1"/>
<evidence type="ECO:0000305" key="2"/>
<accession>P28672</accession>
<sequence>MHPNMKMWTGWAACAFLLFVCLGTLTEGYPTKPDNPGEGAPAEELAKYYSALRHYINLITRQRYGKRSSADTLISDLLIGETESHPQTRYEDQLVW</sequence>
<feature type="signal peptide" evidence="1">
    <location>
        <begin position="1"/>
        <end position="28"/>
    </location>
</feature>
<feature type="peptide" id="PRO_0000025337" description="Neuropeptide Y">
    <location>
        <begin position="29"/>
        <end position="64"/>
    </location>
</feature>
<feature type="peptide" id="PRO_0000025338" description="C-flanking peptide of NPY">
    <location>
        <begin position="68"/>
        <end position="96"/>
    </location>
</feature>
<feature type="modified residue" description="Tyrosine amide" evidence="1">
    <location>
        <position position="64"/>
    </location>
</feature>
<name>NPY_CARAU</name>
<dbReference type="EMBL" id="M87297">
    <property type="protein sequence ID" value="AAA49186.1"/>
    <property type="molecule type" value="mRNA"/>
</dbReference>
<dbReference type="PIR" id="B41979">
    <property type="entry name" value="B41979"/>
</dbReference>
<dbReference type="OrthoDB" id="9852947at2759"/>
<dbReference type="Proteomes" id="UP000515129">
    <property type="component" value="Unplaced"/>
</dbReference>
<dbReference type="GO" id="GO:0005615">
    <property type="term" value="C:extracellular space"/>
    <property type="evidence" value="ECO:0007669"/>
    <property type="project" value="TreeGrafter"/>
</dbReference>
<dbReference type="GO" id="GO:0005184">
    <property type="term" value="F:neuropeptide hormone activity"/>
    <property type="evidence" value="ECO:0007669"/>
    <property type="project" value="TreeGrafter"/>
</dbReference>
<dbReference type="GO" id="GO:0031841">
    <property type="term" value="F:neuropeptide Y receptor binding"/>
    <property type="evidence" value="ECO:0007669"/>
    <property type="project" value="TreeGrafter"/>
</dbReference>
<dbReference type="GO" id="GO:0007631">
    <property type="term" value="P:feeding behavior"/>
    <property type="evidence" value="ECO:0007669"/>
    <property type="project" value="TreeGrafter"/>
</dbReference>
<dbReference type="GO" id="GO:0007218">
    <property type="term" value="P:neuropeptide signaling pathway"/>
    <property type="evidence" value="ECO:0007669"/>
    <property type="project" value="UniProtKB-KW"/>
</dbReference>
<dbReference type="CDD" id="cd00126">
    <property type="entry name" value="PAH"/>
    <property type="match status" value="1"/>
</dbReference>
<dbReference type="Gene3D" id="6.10.250.900">
    <property type="match status" value="1"/>
</dbReference>
<dbReference type="InterPro" id="IPR001955">
    <property type="entry name" value="Pancreatic_hormone-like"/>
</dbReference>
<dbReference type="InterPro" id="IPR020392">
    <property type="entry name" value="Pancreatic_hormone-like_CS"/>
</dbReference>
<dbReference type="PANTHER" id="PTHR10533">
    <property type="entry name" value="NEUROPEPTIDE Y/PANCREATIC HORMONE/PEPTIDE YY"/>
    <property type="match status" value="1"/>
</dbReference>
<dbReference type="PANTHER" id="PTHR10533:SF5">
    <property type="entry name" value="PRO-NEUROPEPTIDE Y"/>
    <property type="match status" value="1"/>
</dbReference>
<dbReference type="Pfam" id="PF00159">
    <property type="entry name" value="Hormone_3"/>
    <property type="match status" value="1"/>
</dbReference>
<dbReference type="PRINTS" id="PR00278">
    <property type="entry name" value="PANCHORMONE"/>
</dbReference>
<dbReference type="SMART" id="SM00309">
    <property type="entry name" value="PAH"/>
    <property type="match status" value="1"/>
</dbReference>
<dbReference type="PROSITE" id="PS00265">
    <property type="entry name" value="PANCREATIC_HORMONE_1"/>
    <property type="match status" value="1"/>
</dbReference>
<dbReference type="PROSITE" id="PS50276">
    <property type="entry name" value="PANCREATIC_HORMONE_2"/>
    <property type="match status" value="1"/>
</dbReference>
<comment type="function">
    <text>NPY is implicated in the control of feeding and in secretion of gonadotrophin-release hormone.</text>
</comment>
<comment type="subcellular location">
    <subcellularLocation>
        <location>Secreted</location>
    </subcellularLocation>
</comment>
<comment type="similarity">
    <text evidence="2">Belongs to the NPY family.</text>
</comment>
<gene>
    <name type="primary">npy</name>
</gene>
<protein>
    <recommendedName>
        <fullName>Pro-neuropeptide Y</fullName>
    </recommendedName>
    <component>
        <recommendedName>
            <fullName>Neuropeptide Y</fullName>
        </recommendedName>
        <alternativeName>
            <fullName>Neuropeptide tyrosine</fullName>
            <shortName>NPY</shortName>
        </alternativeName>
    </component>
    <component>
        <recommendedName>
            <fullName>C-flanking peptide of NPY</fullName>
            <shortName>CPON</shortName>
        </recommendedName>
    </component>
</protein>
<proteinExistence type="inferred from homology"/>